<evidence type="ECO:0000255" key="1">
    <source>
        <dbReference type="HAMAP-Rule" id="MF_01019"/>
    </source>
</evidence>
<sequence>MNTLLDGIDWEKHPLLPAIVQERGSGEVLMLAYMNQEALNLTLSTQVAHYFSRSKGRIWKKGESSGHIQKIHEIFLDCDSDTILLQVEQVGVACHTGRKSCFFQKVELDSSLSLTSEAPDTSALYGVVDRLYHELLARQGADPQSSYTAKLFSKGENTIGKKIVEEAAELSFAIKDSSESEIVYEAADLLYHALVGLAFRGIHPDKIKQELQRRQGVSGIAEKNSRKDS</sequence>
<name>HIS2_WOLSU</name>
<keyword id="KW-0028">Amino-acid biosynthesis</keyword>
<keyword id="KW-0067">ATP-binding</keyword>
<keyword id="KW-0963">Cytoplasm</keyword>
<keyword id="KW-0368">Histidine biosynthesis</keyword>
<keyword id="KW-0378">Hydrolase</keyword>
<keyword id="KW-0511">Multifunctional enzyme</keyword>
<keyword id="KW-0547">Nucleotide-binding</keyword>
<keyword id="KW-1185">Reference proteome</keyword>
<gene>
    <name evidence="1" type="primary">hisI</name>
    <name evidence="1" type="synonym">hisIE</name>
    <name type="ordered locus">WS0090</name>
</gene>
<organism>
    <name type="scientific">Wolinella succinogenes (strain ATCC 29543 / DSM 1740 / CCUG 13145 / JCM 31913 / LMG 7466 / NCTC 11488 / FDC 602W)</name>
    <name type="common">Vibrio succinogenes</name>
    <dbReference type="NCBI Taxonomy" id="273121"/>
    <lineage>
        <taxon>Bacteria</taxon>
        <taxon>Pseudomonadati</taxon>
        <taxon>Campylobacterota</taxon>
        <taxon>Epsilonproteobacteria</taxon>
        <taxon>Campylobacterales</taxon>
        <taxon>Helicobacteraceae</taxon>
        <taxon>Wolinella</taxon>
    </lineage>
</organism>
<proteinExistence type="inferred from homology"/>
<reference key="1">
    <citation type="journal article" date="2003" name="Proc. Natl. Acad. Sci. U.S.A.">
        <title>Complete genome sequence and analysis of Wolinella succinogenes.</title>
        <authorList>
            <person name="Baar C."/>
            <person name="Eppinger M."/>
            <person name="Raddatz G."/>
            <person name="Simon J."/>
            <person name="Lanz C."/>
            <person name="Klimmek O."/>
            <person name="Nandakumar R."/>
            <person name="Gross R."/>
            <person name="Rosinus A."/>
            <person name="Keller H."/>
            <person name="Jagtap P."/>
            <person name="Linke B."/>
            <person name="Meyer F."/>
            <person name="Lederer H."/>
            <person name="Schuster S.C."/>
        </authorList>
    </citation>
    <scope>NUCLEOTIDE SEQUENCE [LARGE SCALE GENOMIC DNA]</scope>
    <source>
        <strain>ATCC 29543 / DSM 1740 / CCUG 13145 / JCM 31913 / LMG 7466 / NCTC 11488 / FDC 602W</strain>
    </source>
</reference>
<feature type="chain" id="PRO_0000136449" description="Histidine biosynthesis bifunctional protein HisIE">
    <location>
        <begin position="1"/>
        <end position="229"/>
    </location>
</feature>
<feature type="region of interest" description="Phosphoribosyl-AMP cyclohydrolase">
    <location>
        <begin position="1"/>
        <end position="127"/>
    </location>
</feature>
<feature type="region of interest" description="Phosphoribosyl-ATP pyrophosphohydrolase">
    <location>
        <begin position="128"/>
        <end position="229"/>
    </location>
</feature>
<protein>
    <recommendedName>
        <fullName evidence="1">Histidine biosynthesis bifunctional protein HisIE</fullName>
    </recommendedName>
    <domain>
        <recommendedName>
            <fullName evidence="1">Phosphoribosyl-AMP cyclohydrolase</fullName>
            <shortName evidence="1">PRA-CH</shortName>
            <ecNumber evidence="1">3.5.4.19</ecNumber>
        </recommendedName>
    </domain>
    <domain>
        <recommendedName>
            <fullName evidence="1">Phosphoribosyl-ATP pyrophosphatase</fullName>
            <shortName evidence="1">PRA-PH</shortName>
            <ecNumber evidence="1">3.6.1.31</ecNumber>
        </recommendedName>
    </domain>
</protein>
<comment type="catalytic activity">
    <reaction evidence="1">
        <text>1-(5-phospho-beta-D-ribosyl)-ATP + H2O = 1-(5-phospho-beta-D-ribosyl)-5'-AMP + diphosphate + H(+)</text>
        <dbReference type="Rhea" id="RHEA:22828"/>
        <dbReference type="ChEBI" id="CHEBI:15377"/>
        <dbReference type="ChEBI" id="CHEBI:15378"/>
        <dbReference type="ChEBI" id="CHEBI:33019"/>
        <dbReference type="ChEBI" id="CHEBI:59457"/>
        <dbReference type="ChEBI" id="CHEBI:73183"/>
        <dbReference type="EC" id="3.6.1.31"/>
    </reaction>
</comment>
<comment type="catalytic activity">
    <reaction evidence="1">
        <text>1-(5-phospho-beta-D-ribosyl)-5'-AMP + H2O = 1-(5-phospho-beta-D-ribosyl)-5-[(5-phospho-beta-D-ribosylamino)methylideneamino]imidazole-4-carboxamide</text>
        <dbReference type="Rhea" id="RHEA:20049"/>
        <dbReference type="ChEBI" id="CHEBI:15377"/>
        <dbReference type="ChEBI" id="CHEBI:58435"/>
        <dbReference type="ChEBI" id="CHEBI:59457"/>
        <dbReference type="EC" id="3.5.4.19"/>
    </reaction>
</comment>
<comment type="pathway">
    <text evidence="1">Amino-acid biosynthesis; L-histidine biosynthesis; L-histidine from 5-phospho-alpha-D-ribose 1-diphosphate: step 2/9.</text>
</comment>
<comment type="pathway">
    <text evidence="1">Amino-acid biosynthesis; L-histidine biosynthesis; L-histidine from 5-phospho-alpha-D-ribose 1-diphosphate: step 3/9.</text>
</comment>
<comment type="subcellular location">
    <subcellularLocation>
        <location evidence="1">Cytoplasm</location>
    </subcellularLocation>
</comment>
<comment type="similarity">
    <text evidence="1">In the N-terminal section; belongs to the PRA-CH family.</text>
</comment>
<comment type="similarity">
    <text evidence="1">In the C-terminal section; belongs to the PRA-PH family.</text>
</comment>
<accession>Q7MAQ8</accession>
<dbReference type="EC" id="3.5.4.19" evidence="1"/>
<dbReference type="EC" id="3.6.1.31" evidence="1"/>
<dbReference type="EMBL" id="BX571657">
    <property type="protein sequence ID" value="CAE09258.1"/>
    <property type="molecule type" value="Genomic_DNA"/>
</dbReference>
<dbReference type="RefSeq" id="WP_011138058.1">
    <property type="nucleotide sequence ID" value="NC_005090.1"/>
</dbReference>
<dbReference type="SMR" id="Q7MAQ8"/>
<dbReference type="STRING" id="273121.WS0090"/>
<dbReference type="KEGG" id="wsu:WS0090"/>
<dbReference type="eggNOG" id="COG0139">
    <property type="taxonomic scope" value="Bacteria"/>
</dbReference>
<dbReference type="eggNOG" id="COG0140">
    <property type="taxonomic scope" value="Bacteria"/>
</dbReference>
<dbReference type="HOGENOM" id="CLU_048577_3_0_7"/>
<dbReference type="UniPathway" id="UPA00031">
    <property type="reaction ID" value="UER00007"/>
</dbReference>
<dbReference type="UniPathway" id="UPA00031">
    <property type="reaction ID" value="UER00008"/>
</dbReference>
<dbReference type="Proteomes" id="UP000000422">
    <property type="component" value="Chromosome"/>
</dbReference>
<dbReference type="GO" id="GO:0005737">
    <property type="term" value="C:cytoplasm"/>
    <property type="evidence" value="ECO:0007669"/>
    <property type="project" value="UniProtKB-SubCell"/>
</dbReference>
<dbReference type="GO" id="GO:0005524">
    <property type="term" value="F:ATP binding"/>
    <property type="evidence" value="ECO:0007669"/>
    <property type="project" value="UniProtKB-KW"/>
</dbReference>
<dbReference type="GO" id="GO:0004635">
    <property type="term" value="F:phosphoribosyl-AMP cyclohydrolase activity"/>
    <property type="evidence" value="ECO:0007669"/>
    <property type="project" value="UniProtKB-UniRule"/>
</dbReference>
<dbReference type="GO" id="GO:0004636">
    <property type="term" value="F:phosphoribosyl-ATP diphosphatase activity"/>
    <property type="evidence" value="ECO:0007669"/>
    <property type="project" value="UniProtKB-UniRule"/>
</dbReference>
<dbReference type="GO" id="GO:0000105">
    <property type="term" value="P:L-histidine biosynthetic process"/>
    <property type="evidence" value="ECO:0007669"/>
    <property type="project" value="UniProtKB-UniRule"/>
</dbReference>
<dbReference type="CDD" id="cd11534">
    <property type="entry name" value="NTP-PPase_HisIE_like"/>
    <property type="match status" value="1"/>
</dbReference>
<dbReference type="FunFam" id="3.10.20.810:FF:000001">
    <property type="entry name" value="Histidine biosynthesis bifunctional protein HisIE"/>
    <property type="match status" value="1"/>
</dbReference>
<dbReference type="Gene3D" id="1.10.287.1080">
    <property type="entry name" value="MazG-like"/>
    <property type="match status" value="1"/>
</dbReference>
<dbReference type="Gene3D" id="3.10.20.810">
    <property type="entry name" value="Phosphoribosyl-AMP cyclohydrolase"/>
    <property type="match status" value="1"/>
</dbReference>
<dbReference type="HAMAP" id="MF_01020">
    <property type="entry name" value="HisE"/>
    <property type="match status" value="1"/>
</dbReference>
<dbReference type="HAMAP" id="MF_01021">
    <property type="entry name" value="HisI"/>
    <property type="match status" value="1"/>
</dbReference>
<dbReference type="HAMAP" id="MF_01019">
    <property type="entry name" value="HisIE"/>
    <property type="match status" value="1"/>
</dbReference>
<dbReference type="InterPro" id="IPR023019">
    <property type="entry name" value="His_synth_HisIE"/>
</dbReference>
<dbReference type="InterPro" id="IPR008179">
    <property type="entry name" value="HisE"/>
</dbReference>
<dbReference type="InterPro" id="IPR026660">
    <property type="entry name" value="PRA-CH"/>
</dbReference>
<dbReference type="InterPro" id="IPR021130">
    <property type="entry name" value="PRib-ATP_PPHydrolase-like"/>
</dbReference>
<dbReference type="InterPro" id="IPR002496">
    <property type="entry name" value="PRib_AMP_CycHydrolase_dom"/>
</dbReference>
<dbReference type="InterPro" id="IPR038019">
    <property type="entry name" value="PRib_AMP_CycHydrolase_sf"/>
</dbReference>
<dbReference type="NCBIfam" id="TIGR03188">
    <property type="entry name" value="histidine_hisI"/>
    <property type="match status" value="1"/>
</dbReference>
<dbReference type="NCBIfam" id="NF000768">
    <property type="entry name" value="PRK00051.1"/>
    <property type="match status" value="1"/>
</dbReference>
<dbReference type="NCBIfam" id="NF001611">
    <property type="entry name" value="PRK00400.1-3"/>
    <property type="match status" value="1"/>
</dbReference>
<dbReference type="NCBIfam" id="NF002747">
    <property type="entry name" value="PRK02759.1"/>
    <property type="match status" value="1"/>
</dbReference>
<dbReference type="PANTHER" id="PTHR42945">
    <property type="entry name" value="HISTIDINE BIOSYNTHESIS BIFUNCTIONAL PROTEIN"/>
    <property type="match status" value="1"/>
</dbReference>
<dbReference type="PANTHER" id="PTHR42945:SF1">
    <property type="entry name" value="HISTIDINE BIOSYNTHESIS BIFUNCTIONAL PROTEIN HIS7"/>
    <property type="match status" value="1"/>
</dbReference>
<dbReference type="Pfam" id="PF01502">
    <property type="entry name" value="PRA-CH"/>
    <property type="match status" value="1"/>
</dbReference>
<dbReference type="Pfam" id="PF01503">
    <property type="entry name" value="PRA-PH"/>
    <property type="match status" value="1"/>
</dbReference>
<dbReference type="SUPFAM" id="SSF101386">
    <property type="entry name" value="all-alpha NTP pyrophosphatases"/>
    <property type="match status" value="1"/>
</dbReference>
<dbReference type="SUPFAM" id="SSF141734">
    <property type="entry name" value="HisI-like"/>
    <property type="match status" value="1"/>
</dbReference>